<proteinExistence type="inferred from homology"/>
<accession>C3PNH0</accession>
<evidence type="ECO:0000255" key="1">
    <source>
        <dbReference type="HAMAP-Rule" id="MF_00361"/>
    </source>
</evidence>
<name>NADK_RICAE</name>
<dbReference type="EC" id="2.7.1.23" evidence="1"/>
<dbReference type="EMBL" id="CP001612">
    <property type="protein sequence ID" value="ACP53480.1"/>
    <property type="molecule type" value="Genomic_DNA"/>
</dbReference>
<dbReference type="RefSeq" id="WP_012719697.1">
    <property type="nucleotide sequence ID" value="NC_012633.1"/>
</dbReference>
<dbReference type="SMR" id="C3PNH0"/>
<dbReference type="KEGG" id="raf:RAF_ORF0571"/>
<dbReference type="HOGENOM" id="CLU_073319_0_0_5"/>
<dbReference type="Proteomes" id="UP000002305">
    <property type="component" value="Chromosome"/>
</dbReference>
<dbReference type="GO" id="GO:0005737">
    <property type="term" value="C:cytoplasm"/>
    <property type="evidence" value="ECO:0007669"/>
    <property type="project" value="UniProtKB-SubCell"/>
</dbReference>
<dbReference type="GO" id="GO:0005524">
    <property type="term" value="F:ATP binding"/>
    <property type="evidence" value="ECO:0007669"/>
    <property type="project" value="UniProtKB-KW"/>
</dbReference>
<dbReference type="GO" id="GO:0046872">
    <property type="term" value="F:metal ion binding"/>
    <property type="evidence" value="ECO:0007669"/>
    <property type="project" value="UniProtKB-UniRule"/>
</dbReference>
<dbReference type="GO" id="GO:0051287">
    <property type="term" value="F:NAD binding"/>
    <property type="evidence" value="ECO:0007669"/>
    <property type="project" value="UniProtKB-ARBA"/>
</dbReference>
<dbReference type="GO" id="GO:0003951">
    <property type="term" value="F:NAD+ kinase activity"/>
    <property type="evidence" value="ECO:0007669"/>
    <property type="project" value="UniProtKB-UniRule"/>
</dbReference>
<dbReference type="GO" id="GO:0019674">
    <property type="term" value="P:NAD metabolic process"/>
    <property type="evidence" value="ECO:0007669"/>
    <property type="project" value="InterPro"/>
</dbReference>
<dbReference type="GO" id="GO:0006741">
    <property type="term" value="P:NADP biosynthetic process"/>
    <property type="evidence" value="ECO:0007669"/>
    <property type="project" value="UniProtKB-UniRule"/>
</dbReference>
<dbReference type="Gene3D" id="3.40.50.10330">
    <property type="entry name" value="Probable inorganic polyphosphate/atp-NAD kinase, domain 1"/>
    <property type="match status" value="1"/>
</dbReference>
<dbReference type="Gene3D" id="2.60.200.30">
    <property type="entry name" value="Probable inorganic polyphosphate/atp-NAD kinase, domain 2"/>
    <property type="match status" value="1"/>
</dbReference>
<dbReference type="HAMAP" id="MF_00361">
    <property type="entry name" value="NAD_kinase"/>
    <property type="match status" value="1"/>
</dbReference>
<dbReference type="InterPro" id="IPR017438">
    <property type="entry name" value="ATP-NAD_kinase_N"/>
</dbReference>
<dbReference type="InterPro" id="IPR017437">
    <property type="entry name" value="ATP-NAD_kinase_PpnK-typ_C"/>
</dbReference>
<dbReference type="InterPro" id="IPR016064">
    <property type="entry name" value="NAD/diacylglycerol_kinase_sf"/>
</dbReference>
<dbReference type="InterPro" id="IPR002504">
    <property type="entry name" value="NADK"/>
</dbReference>
<dbReference type="NCBIfam" id="NF003406">
    <property type="entry name" value="PRK04761.1"/>
    <property type="match status" value="1"/>
</dbReference>
<dbReference type="PANTHER" id="PTHR20275">
    <property type="entry name" value="NAD KINASE"/>
    <property type="match status" value="1"/>
</dbReference>
<dbReference type="PANTHER" id="PTHR20275:SF0">
    <property type="entry name" value="NAD KINASE"/>
    <property type="match status" value="1"/>
</dbReference>
<dbReference type="Pfam" id="PF01513">
    <property type="entry name" value="NAD_kinase"/>
    <property type="match status" value="1"/>
</dbReference>
<dbReference type="Pfam" id="PF20143">
    <property type="entry name" value="NAD_kinase_C"/>
    <property type="match status" value="1"/>
</dbReference>
<dbReference type="SUPFAM" id="SSF111331">
    <property type="entry name" value="NAD kinase/diacylglycerol kinase-like"/>
    <property type="match status" value="1"/>
</dbReference>
<sequence length="255" mass="28517">MNINKIALIYNHNSKHLAIIEEIKQLYNYCKIEEAEVIIVIGGDGELLHNIHRYMHLNIPFYGVNLGSLGFLMNPLDTKKLLQNIHESTVSILNPLLMQVEDTSGQIYTALAINEVSIFRKTNQAAKFRIEVNGIERMSELVADGALVATPAGSSAYNLSASGPILPLESNMLCLTPICSFRPRRWHGALLLSSATIKFEILNTNKRPVNATADFQEFNNITNVTVKSTKDKPVKLLFNKNHTLEDRIIKEQFGG</sequence>
<keyword id="KW-0067">ATP-binding</keyword>
<keyword id="KW-0963">Cytoplasm</keyword>
<keyword id="KW-0418">Kinase</keyword>
<keyword id="KW-0520">NAD</keyword>
<keyword id="KW-0521">NADP</keyword>
<keyword id="KW-0547">Nucleotide-binding</keyword>
<keyword id="KW-0808">Transferase</keyword>
<protein>
    <recommendedName>
        <fullName evidence="1">NAD kinase</fullName>
        <ecNumber evidence="1">2.7.1.23</ecNumber>
    </recommendedName>
    <alternativeName>
        <fullName evidence="1">ATP-dependent NAD kinase</fullName>
    </alternativeName>
</protein>
<reference key="1">
    <citation type="journal article" date="2009" name="BMC Genomics">
        <title>Analysis of the Rickettsia africae genome reveals that virulence acquisition in Rickettsia species may be explained by genome reduction.</title>
        <authorList>
            <person name="Fournier P.-E."/>
            <person name="El Karkouri K."/>
            <person name="Leroy Q."/>
            <person name="Robert C."/>
            <person name="Giumelli B."/>
            <person name="Renesto P."/>
            <person name="Socolovschi C."/>
            <person name="Parola P."/>
            <person name="Audic S."/>
            <person name="Raoult D."/>
        </authorList>
    </citation>
    <scope>NUCLEOTIDE SEQUENCE [LARGE SCALE GENOMIC DNA]</scope>
    <source>
        <strain>ESF-5</strain>
    </source>
</reference>
<gene>
    <name evidence="1" type="primary">nadK</name>
    <name type="ordered locus">RAF_ORF0571</name>
</gene>
<comment type="function">
    <text evidence="1">Involved in the regulation of the intracellular balance of NAD and NADP, and is a key enzyme in the biosynthesis of NADP. Catalyzes specifically the phosphorylation on 2'-hydroxyl of the adenosine moiety of NAD to yield NADP.</text>
</comment>
<comment type="catalytic activity">
    <reaction evidence="1">
        <text>NAD(+) + ATP = ADP + NADP(+) + H(+)</text>
        <dbReference type="Rhea" id="RHEA:18629"/>
        <dbReference type="ChEBI" id="CHEBI:15378"/>
        <dbReference type="ChEBI" id="CHEBI:30616"/>
        <dbReference type="ChEBI" id="CHEBI:57540"/>
        <dbReference type="ChEBI" id="CHEBI:58349"/>
        <dbReference type="ChEBI" id="CHEBI:456216"/>
        <dbReference type="EC" id="2.7.1.23"/>
    </reaction>
</comment>
<comment type="cofactor">
    <cofactor evidence="1">
        <name>a divalent metal cation</name>
        <dbReference type="ChEBI" id="CHEBI:60240"/>
    </cofactor>
</comment>
<comment type="subcellular location">
    <subcellularLocation>
        <location evidence="1">Cytoplasm</location>
    </subcellularLocation>
</comment>
<comment type="similarity">
    <text evidence="1">Belongs to the NAD kinase family.</text>
</comment>
<feature type="chain" id="PRO_1000205423" description="NAD kinase">
    <location>
        <begin position="1"/>
        <end position="255"/>
    </location>
</feature>
<feature type="active site" description="Proton acceptor" evidence="1">
    <location>
        <position position="44"/>
    </location>
</feature>
<feature type="binding site" evidence="1">
    <location>
        <begin position="44"/>
        <end position="45"/>
    </location>
    <ligand>
        <name>NAD(+)</name>
        <dbReference type="ChEBI" id="CHEBI:57540"/>
    </ligand>
</feature>
<feature type="binding site" evidence="1">
    <location>
        <position position="49"/>
    </location>
    <ligand>
        <name>NAD(+)</name>
        <dbReference type="ChEBI" id="CHEBI:57540"/>
    </ligand>
</feature>
<feature type="binding site" evidence="1">
    <location>
        <begin position="114"/>
        <end position="115"/>
    </location>
    <ligand>
        <name>NAD(+)</name>
        <dbReference type="ChEBI" id="CHEBI:57540"/>
    </ligand>
</feature>
<feature type="binding site" evidence="1">
    <location>
        <position position="144"/>
    </location>
    <ligand>
        <name>NAD(+)</name>
        <dbReference type="ChEBI" id="CHEBI:57540"/>
    </ligand>
</feature>
<feature type="binding site" evidence="1">
    <location>
        <position position="152"/>
    </location>
    <ligand>
        <name>NAD(+)</name>
        <dbReference type="ChEBI" id="CHEBI:57540"/>
    </ligand>
</feature>
<feature type="binding site" evidence="1">
    <location>
        <begin position="155"/>
        <end position="160"/>
    </location>
    <ligand>
        <name>NAD(+)</name>
        <dbReference type="ChEBI" id="CHEBI:57540"/>
    </ligand>
</feature>
<feature type="binding site" evidence="1">
    <location>
        <position position="216"/>
    </location>
    <ligand>
        <name>NAD(+)</name>
        <dbReference type="ChEBI" id="CHEBI:57540"/>
    </ligand>
</feature>
<organism>
    <name type="scientific">Rickettsia africae (strain ESF-5)</name>
    <dbReference type="NCBI Taxonomy" id="347255"/>
    <lineage>
        <taxon>Bacteria</taxon>
        <taxon>Pseudomonadati</taxon>
        <taxon>Pseudomonadota</taxon>
        <taxon>Alphaproteobacteria</taxon>
        <taxon>Rickettsiales</taxon>
        <taxon>Rickettsiaceae</taxon>
        <taxon>Rickettsieae</taxon>
        <taxon>Rickettsia</taxon>
        <taxon>spotted fever group</taxon>
    </lineage>
</organism>